<reference key="1">
    <citation type="submission" date="2005-10" db="EMBL/GenBank/DDBJ databases">
        <title>Complete sequence of Pelobacter carbinolicus DSM 2380.</title>
        <authorList>
            <person name="Copeland A."/>
            <person name="Lucas S."/>
            <person name="Lapidus A."/>
            <person name="Barry K."/>
            <person name="Detter J.C."/>
            <person name="Glavina T."/>
            <person name="Hammon N."/>
            <person name="Israni S."/>
            <person name="Pitluck S."/>
            <person name="Chertkov O."/>
            <person name="Schmutz J."/>
            <person name="Larimer F."/>
            <person name="Land M."/>
            <person name="Kyrpides N."/>
            <person name="Ivanova N."/>
            <person name="Richardson P."/>
        </authorList>
    </citation>
    <scope>NUCLEOTIDE SEQUENCE [LARGE SCALE GENOMIC DNA]</scope>
    <source>
        <strain>DSM 2380 / NBRC 103641 / GraBd1</strain>
    </source>
</reference>
<gene>
    <name evidence="1" type="primary">rpsT</name>
    <name type="ordered locus">Pcar_1416</name>
</gene>
<sequence>MANHKSALKRNRQAAVRNARNTHIRSTMRSLVKMVRVAAASGNQEEAKTALDRAVPYIDKAATKGVIHKATASRKISRLVKLVNTVG</sequence>
<name>RS20_SYNC1</name>
<comment type="function">
    <text evidence="1">Binds directly to 16S ribosomal RNA.</text>
</comment>
<comment type="similarity">
    <text evidence="1">Belongs to the bacterial ribosomal protein bS20 family.</text>
</comment>
<accession>Q3A4P5</accession>
<proteinExistence type="inferred from homology"/>
<evidence type="ECO:0000255" key="1">
    <source>
        <dbReference type="HAMAP-Rule" id="MF_00500"/>
    </source>
</evidence>
<evidence type="ECO:0000256" key="2">
    <source>
        <dbReference type="SAM" id="MobiDB-lite"/>
    </source>
</evidence>
<evidence type="ECO:0000305" key="3"/>
<protein>
    <recommendedName>
        <fullName evidence="1">Small ribosomal subunit protein bS20</fullName>
    </recommendedName>
    <alternativeName>
        <fullName evidence="3">30S ribosomal protein S20</fullName>
    </alternativeName>
</protein>
<keyword id="KW-1185">Reference proteome</keyword>
<keyword id="KW-0687">Ribonucleoprotein</keyword>
<keyword id="KW-0689">Ribosomal protein</keyword>
<keyword id="KW-0694">RNA-binding</keyword>
<keyword id="KW-0699">rRNA-binding</keyword>
<feature type="chain" id="PRO_0000224976" description="Small ribosomal subunit protein bS20">
    <location>
        <begin position="1"/>
        <end position="87"/>
    </location>
</feature>
<feature type="region of interest" description="Disordered" evidence="2">
    <location>
        <begin position="1"/>
        <end position="21"/>
    </location>
</feature>
<feature type="compositionally biased region" description="Basic residues" evidence="2">
    <location>
        <begin position="1"/>
        <end position="12"/>
    </location>
</feature>
<dbReference type="EMBL" id="CP000142">
    <property type="protein sequence ID" value="ABA88662.1"/>
    <property type="molecule type" value="Genomic_DNA"/>
</dbReference>
<dbReference type="RefSeq" id="WP_011341145.1">
    <property type="nucleotide sequence ID" value="NC_007498.2"/>
</dbReference>
<dbReference type="SMR" id="Q3A4P5"/>
<dbReference type="STRING" id="338963.Pcar_1416"/>
<dbReference type="KEGG" id="pca:Pcar_1416"/>
<dbReference type="eggNOG" id="COG0268">
    <property type="taxonomic scope" value="Bacteria"/>
</dbReference>
<dbReference type="HOGENOM" id="CLU_160655_3_1_7"/>
<dbReference type="OrthoDB" id="9807974at2"/>
<dbReference type="Proteomes" id="UP000002534">
    <property type="component" value="Chromosome"/>
</dbReference>
<dbReference type="GO" id="GO:0005829">
    <property type="term" value="C:cytosol"/>
    <property type="evidence" value="ECO:0007669"/>
    <property type="project" value="TreeGrafter"/>
</dbReference>
<dbReference type="GO" id="GO:0015935">
    <property type="term" value="C:small ribosomal subunit"/>
    <property type="evidence" value="ECO:0007669"/>
    <property type="project" value="TreeGrafter"/>
</dbReference>
<dbReference type="GO" id="GO:0070181">
    <property type="term" value="F:small ribosomal subunit rRNA binding"/>
    <property type="evidence" value="ECO:0007669"/>
    <property type="project" value="TreeGrafter"/>
</dbReference>
<dbReference type="GO" id="GO:0003735">
    <property type="term" value="F:structural constituent of ribosome"/>
    <property type="evidence" value="ECO:0007669"/>
    <property type="project" value="InterPro"/>
</dbReference>
<dbReference type="GO" id="GO:0006412">
    <property type="term" value="P:translation"/>
    <property type="evidence" value="ECO:0007669"/>
    <property type="project" value="UniProtKB-UniRule"/>
</dbReference>
<dbReference type="FunFam" id="1.20.58.110:FF:000001">
    <property type="entry name" value="30S ribosomal protein S20"/>
    <property type="match status" value="1"/>
</dbReference>
<dbReference type="Gene3D" id="1.20.58.110">
    <property type="entry name" value="Ribosomal protein S20"/>
    <property type="match status" value="1"/>
</dbReference>
<dbReference type="HAMAP" id="MF_00500">
    <property type="entry name" value="Ribosomal_bS20"/>
    <property type="match status" value="1"/>
</dbReference>
<dbReference type="InterPro" id="IPR002583">
    <property type="entry name" value="Ribosomal_bS20"/>
</dbReference>
<dbReference type="InterPro" id="IPR036510">
    <property type="entry name" value="Ribosomal_bS20_sf"/>
</dbReference>
<dbReference type="NCBIfam" id="TIGR00029">
    <property type="entry name" value="S20"/>
    <property type="match status" value="1"/>
</dbReference>
<dbReference type="PANTHER" id="PTHR33398">
    <property type="entry name" value="30S RIBOSOMAL PROTEIN S20"/>
    <property type="match status" value="1"/>
</dbReference>
<dbReference type="PANTHER" id="PTHR33398:SF1">
    <property type="entry name" value="SMALL RIBOSOMAL SUBUNIT PROTEIN BS20C"/>
    <property type="match status" value="1"/>
</dbReference>
<dbReference type="Pfam" id="PF01649">
    <property type="entry name" value="Ribosomal_S20p"/>
    <property type="match status" value="1"/>
</dbReference>
<dbReference type="SUPFAM" id="SSF46992">
    <property type="entry name" value="Ribosomal protein S20"/>
    <property type="match status" value="1"/>
</dbReference>
<organism>
    <name type="scientific">Syntrophotalea carbinolica (strain DSM 2380 / NBRC 103641 / GraBd1)</name>
    <name type="common">Pelobacter carbinolicus</name>
    <dbReference type="NCBI Taxonomy" id="338963"/>
    <lineage>
        <taxon>Bacteria</taxon>
        <taxon>Pseudomonadati</taxon>
        <taxon>Thermodesulfobacteriota</taxon>
        <taxon>Desulfuromonadia</taxon>
        <taxon>Desulfuromonadales</taxon>
        <taxon>Syntrophotaleaceae</taxon>
        <taxon>Syntrophotalea</taxon>
    </lineage>
</organism>